<name>DCUP_SERP5</name>
<gene>
    <name evidence="1" type="primary">hemE</name>
    <name type="ordered locus">Spro_0287</name>
</gene>
<feature type="chain" id="PRO_1000058646" description="Uroporphyrinogen decarboxylase">
    <location>
        <begin position="1"/>
        <end position="354"/>
    </location>
</feature>
<feature type="binding site" evidence="1">
    <location>
        <begin position="27"/>
        <end position="31"/>
    </location>
    <ligand>
        <name>substrate</name>
    </ligand>
</feature>
<feature type="binding site" evidence="1">
    <location>
        <position position="77"/>
    </location>
    <ligand>
        <name>substrate</name>
    </ligand>
</feature>
<feature type="binding site" evidence="1">
    <location>
        <position position="154"/>
    </location>
    <ligand>
        <name>substrate</name>
    </ligand>
</feature>
<feature type="binding site" evidence="1">
    <location>
        <position position="209"/>
    </location>
    <ligand>
        <name>substrate</name>
    </ligand>
</feature>
<feature type="binding site" evidence="1">
    <location>
        <position position="327"/>
    </location>
    <ligand>
        <name>substrate</name>
    </ligand>
</feature>
<feature type="site" description="Transition state stabilizer" evidence="1">
    <location>
        <position position="77"/>
    </location>
</feature>
<sequence>MNELKNDRYLRALLRQPVDVTPVWMMRQAGRYLPEYKATRAQAGDFMSLCKNAELACEVTLQPLRRFPLDAAILFSDILTIPDAMGLGLYFETGEGPRFSSPITSRADVDKLPAFDPEVELGYVMNAVRTIRRELKGEVPLIGFSGSPWTLATYMVEGGSSKAFTKLKKMMYAEPATLHLLLDKLADSVILYLNAQIKAGAQSVMVFDTWGGVLTGRDYREFSLHYMHKIVDGLLRENDGRRVPVTLFTKGGGQWLEAMAATGCDALGLDWTTDIADARRRVGDKVALQGNMDPSMLYASPERIGQEVETILAGFGHGEGHVFNLGHGIHPDVPPENAGAFVEAVHAQSGKYHR</sequence>
<reference key="1">
    <citation type="submission" date="2007-09" db="EMBL/GenBank/DDBJ databases">
        <title>Complete sequence of chromosome of Serratia proteamaculans 568.</title>
        <authorList>
            <consortium name="US DOE Joint Genome Institute"/>
            <person name="Copeland A."/>
            <person name="Lucas S."/>
            <person name="Lapidus A."/>
            <person name="Barry K."/>
            <person name="Glavina del Rio T."/>
            <person name="Dalin E."/>
            <person name="Tice H."/>
            <person name="Pitluck S."/>
            <person name="Chain P."/>
            <person name="Malfatti S."/>
            <person name="Shin M."/>
            <person name="Vergez L."/>
            <person name="Schmutz J."/>
            <person name="Larimer F."/>
            <person name="Land M."/>
            <person name="Hauser L."/>
            <person name="Kyrpides N."/>
            <person name="Kim E."/>
            <person name="Taghavi S."/>
            <person name="Newman L."/>
            <person name="Vangronsveld J."/>
            <person name="van der Lelie D."/>
            <person name="Richardson P."/>
        </authorList>
    </citation>
    <scope>NUCLEOTIDE SEQUENCE [LARGE SCALE GENOMIC DNA]</scope>
    <source>
        <strain>568</strain>
    </source>
</reference>
<protein>
    <recommendedName>
        <fullName evidence="1">Uroporphyrinogen decarboxylase</fullName>
        <shortName evidence="1">UPD</shortName>
        <shortName evidence="1">URO-D</shortName>
        <ecNumber evidence="1">4.1.1.37</ecNumber>
    </recommendedName>
</protein>
<proteinExistence type="inferred from homology"/>
<accession>A8G8F7</accession>
<comment type="function">
    <text evidence="1">Catalyzes the decarboxylation of four acetate groups of uroporphyrinogen-III to yield coproporphyrinogen-III.</text>
</comment>
<comment type="catalytic activity">
    <reaction evidence="1">
        <text>uroporphyrinogen III + 4 H(+) = coproporphyrinogen III + 4 CO2</text>
        <dbReference type="Rhea" id="RHEA:19865"/>
        <dbReference type="ChEBI" id="CHEBI:15378"/>
        <dbReference type="ChEBI" id="CHEBI:16526"/>
        <dbReference type="ChEBI" id="CHEBI:57308"/>
        <dbReference type="ChEBI" id="CHEBI:57309"/>
        <dbReference type="EC" id="4.1.1.37"/>
    </reaction>
</comment>
<comment type="pathway">
    <text evidence="1">Porphyrin-containing compound metabolism; protoporphyrin-IX biosynthesis; coproporphyrinogen-III from 5-aminolevulinate: step 4/4.</text>
</comment>
<comment type="subunit">
    <text evidence="1">Homodimer.</text>
</comment>
<comment type="subcellular location">
    <subcellularLocation>
        <location evidence="1">Cytoplasm</location>
    </subcellularLocation>
</comment>
<comment type="similarity">
    <text evidence="1">Belongs to the uroporphyrinogen decarboxylase family.</text>
</comment>
<dbReference type="EC" id="4.1.1.37" evidence="1"/>
<dbReference type="EMBL" id="CP000826">
    <property type="protein sequence ID" value="ABV39397.1"/>
    <property type="molecule type" value="Genomic_DNA"/>
</dbReference>
<dbReference type="SMR" id="A8G8F7"/>
<dbReference type="STRING" id="399741.Spro_0287"/>
<dbReference type="KEGG" id="spe:Spro_0287"/>
<dbReference type="eggNOG" id="COG0407">
    <property type="taxonomic scope" value="Bacteria"/>
</dbReference>
<dbReference type="HOGENOM" id="CLU_040933_0_0_6"/>
<dbReference type="OrthoDB" id="9806656at2"/>
<dbReference type="UniPathway" id="UPA00251">
    <property type="reaction ID" value="UER00321"/>
</dbReference>
<dbReference type="GO" id="GO:0005829">
    <property type="term" value="C:cytosol"/>
    <property type="evidence" value="ECO:0007669"/>
    <property type="project" value="TreeGrafter"/>
</dbReference>
<dbReference type="GO" id="GO:0004853">
    <property type="term" value="F:uroporphyrinogen decarboxylase activity"/>
    <property type="evidence" value="ECO:0007669"/>
    <property type="project" value="UniProtKB-UniRule"/>
</dbReference>
<dbReference type="GO" id="GO:0019353">
    <property type="term" value="P:protoporphyrinogen IX biosynthetic process from glutamate"/>
    <property type="evidence" value="ECO:0007669"/>
    <property type="project" value="TreeGrafter"/>
</dbReference>
<dbReference type="CDD" id="cd00717">
    <property type="entry name" value="URO-D"/>
    <property type="match status" value="1"/>
</dbReference>
<dbReference type="FunFam" id="3.20.20.210:FF:000001">
    <property type="entry name" value="Uroporphyrinogen decarboxylase"/>
    <property type="match status" value="1"/>
</dbReference>
<dbReference type="Gene3D" id="3.20.20.210">
    <property type="match status" value="1"/>
</dbReference>
<dbReference type="HAMAP" id="MF_00218">
    <property type="entry name" value="URO_D"/>
    <property type="match status" value="1"/>
</dbReference>
<dbReference type="InterPro" id="IPR038071">
    <property type="entry name" value="UROD/MetE-like_sf"/>
</dbReference>
<dbReference type="InterPro" id="IPR006361">
    <property type="entry name" value="Uroporphyrinogen_deCO2ase_HemE"/>
</dbReference>
<dbReference type="InterPro" id="IPR000257">
    <property type="entry name" value="Uroporphyrinogen_deCOase"/>
</dbReference>
<dbReference type="NCBIfam" id="TIGR01464">
    <property type="entry name" value="hemE"/>
    <property type="match status" value="1"/>
</dbReference>
<dbReference type="PANTHER" id="PTHR21091">
    <property type="entry name" value="METHYLTETRAHYDROFOLATE:HOMOCYSTEINE METHYLTRANSFERASE RELATED"/>
    <property type="match status" value="1"/>
</dbReference>
<dbReference type="PANTHER" id="PTHR21091:SF169">
    <property type="entry name" value="UROPORPHYRINOGEN DECARBOXYLASE"/>
    <property type="match status" value="1"/>
</dbReference>
<dbReference type="Pfam" id="PF01208">
    <property type="entry name" value="URO-D"/>
    <property type="match status" value="1"/>
</dbReference>
<dbReference type="SUPFAM" id="SSF51726">
    <property type="entry name" value="UROD/MetE-like"/>
    <property type="match status" value="1"/>
</dbReference>
<dbReference type="PROSITE" id="PS00906">
    <property type="entry name" value="UROD_1"/>
    <property type="match status" value="1"/>
</dbReference>
<dbReference type="PROSITE" id="PS00907">
    <property type="entry name" value="UROD_2"/>
    <property type="match status" value="1"/>
</dbReference>
<organism>
    <name type="scientific">Serratia proteamaculans (strain 568)</name>
    <dbReference type="NCBI Taxonomy" id="399741"/>
    <lineage>
        <taxon>Bacteria</taxon>
        <taxon>Pseudomonadati</taxon>
        <taxon>Pseudomonadota</taxon>
        <taxon>Gammaproteobacteria</taxon>
        <taxon>Enterobacterales</taxon>
        <taxon>Yersiniaceae</taxon>
        <taxon>Serratia</taxon>
    </lineage>
</organism>
<evidence type="ECO:0000255" key="1">
    <source>
        <dbReference type="HAMAP-Rule" id="MF_00218"/>
    </source>
</evidence>
<keyword id="KW-0963">Cytoplasm</keyword>
<keyword id="KW-0210">Decarboxylase</keyword>
<keyword id="KW-0456">Lyase</keyword>
<keyword id="KW-0627">Porphyrin biosynthesis</keyword>